<organism>
    <name type="scientific">Candida albicans (strain SC5314 / ATCC MYA-2876)</name>
    <name type="common">Yeast</name>
    <dbReference type="NCBI Taxonomy" id="237561"/>
    <lineage>
        <taxon>Eukaryota</taxon>
        <taxon>Fungi</taxon>
        <taxon>Dikarya</taxon>
        <taxon>Ascomycota</taxon>
        <taxon>Saccharomycotina</taxon>
        <taxon>Pichiomycetes</taxon>
        <taxon>Debaryomycetaceae</taxon>
        <taxon>Candida/Lodderomyces clade</taxon>
        <taxon>Candida</taxon>
    </lineage>
</organism>
<accession>Q5AJF7</accession>
<keyword id="KW-0002">3D-structure</keyword>
<keyword id="KW-0963">Cytoplasm</keyword>
<keyword id="KW-1185">Reference proteome</keyword>
<keyword id="KW-0687">Ribonucleoprotein</keyword>
<keyword id="KW-0689">Ribosomal protein</keyword>
<evidence type="ECO:0000250" key="1">
    <source>
        <dbReference type="UniProtKB" id="P0CX53"/>
    </source>
</evidence>
<evidence type="ECO:0000305" key="2"/>
<name>RL12_CANAL</name>
<sequence length="165" mass="17763">MPPKFDPNEVKFLYLRAVGGEVGASSALAPKIGPLGLSPKKVGEDIAKATKEYKGIKVTVQLRIQNRQATASVVPSASSLVITALKEPVRDRKKEKNVKHSGNIPLDEIFEIARKMQHKSFGKNLASVSKEILGTAQSVGCRVDGKNPHDIIDAINAGEIDVPEN</sequence>
<feature type="chain" id="PRO_0000456526" description="Large ribosomal subunit protein uL11">
    <location>
        <begin position="1"/>
        <end position="165"/>
    </location>
</feature>
<protein>
    <recommendedName>
        <fullName evidence="1">Large ribosomal subunit protein uL11</fullName>
    </recommendedName>
    <alternativeName>
        <fullName>60S ribosomal protein L12</fullName>
    </alternativeName>
</protein>
<dbReference type="EMBL" id="CP017625">
    <property type="protein sequence ID" value="AOW28248.1"/>
    <property type="molecule type" value="Genomic_DNA"/>
</dbReference>
<dbReference type="RefSeq" id="XP_721712.1">
    <property type="nucleotide sequence ID" value="XM_716619.1"/>
</dbReference>
<dbReference type="PDB" id="8C3A">
    <property type="method" value="X-ray"/>
    <property type="resolution" value="3.00 A"/>
    <property type="chains" value="12=1-165"/>
</dbReference>
<dbReference type="PDB" id="8OH6">
    <property type="method" value="X-ray"/>
    <property type="resolution" value="3.35 A"/>
    <property type="chains" value="12=1-165"/>
</dbReference>
<dbReference type="PDB" id="8OJ3">
    <property type="method" value="X-ray"/>
    <property type="resolution" value="3.50 A"/>
    <property type="chains" value="12=1-165"/>
</dbReference>
<dbReference type="PDBsum" id="8C3A"/>
<dbReference type="PDBsum" id="8OH6"/>
<dbReference type="PDBsum" id="8OJ3"/>
<dbReference type="SMR" id="Q5AJF7"/>
<dbReference type="FunCoup" id="Q5AJF7">
    <property type="interactions" value="1087"/>
</dbReference>
<dbReference type="STRING" id="237561.Q5AJF7"/>
<dbReference type="EnsemblFungi" id="C3_02110W_A-T">
    <property type="protein sequence ID" value="C3_02110W_A-T-p1"/>
    <property type="gene ID" value="C3_02110W_A"/>
</dbReference>
<dbReference type="GeneID" id="3636659"/>
<dbReference type="KEGG" id="cal:CAALFM_C302110WA"/>
<dbReference type="CGD" id="CAL0000181929">
    <property type="gene designation" value="RPL12"/>
</dbReference>
<dbReference type="VEuPathDB" id="FungiDB:C3_02110W_A"/>
<dbReference type="eggNOG" id="KOG0886">
    <property type="taxonomic scope" value="Eukaryota"/>
</dbReference>
<dbReference type="HOGENOM" id="CLU_074237_5_0_1"/>
<dbReference type="InParanoid" id="Q5AJF7"/>
<dbReference type="OMA" id="QPPHDVI"/>
<dbReference type="OrthoDB" id="1478556at2759"/>
<dbReference type="Proteomes" id="UP000000559">
    <property type="component" value="Chromosome 3"/>
</dbReference>
<dbReference type="GO" id="GO:0022625">
    <property type="term" value="C:cytosolic large ribosomal subunit"/>
    <property type="evidence" value="ECO:0000318"/>
    <property type="project" value="GO_Central"/>
</dbReference>
<dbReference type="GO" id="GO:0070180">
    <property type="term" value="F:large ribosomal subunit rRNA binding"/>
    <property type="evidence" value="ECO:0000318"/>
    <property type="project" value="GO_Central"/>
</dbReference>
<dbReference type="GO" id="GO:0003735">
    <property type="term" value="F:structural constituent of ribosome"/>
    <property type="evidence" value="ECO:0000318"/>
    <property type="project" value="GO_Central"/>
</dbReference>
<dbReference type="GO" id="GO:0006412">
    <property type="term" value="P:translation"/>
    <property type="evidence" value="ECO:0000318"/>
    <property type="project" value="GO_Central"/>
</dbReference>
<dbReference type="CDD" id="cd00349">
    <property type="entry name" value="Ribosomal_L11"/>
    <property type="match status" value="1"/>
</dbReference>
<dbReference type="FunFam" id="1.10.10.250:FF:000002">
    <property type="entry name" value="60S ribosomal protein L12"/>
    <property type="match status" value="1"/>
</dbReference>
<dbReference type="FunFam" id="3.30.1550.10:FF:000002">
    <property type="entry name" value="60S ribosomal protein L12"/>
    <property type="match status" value="1"/>
</dbReference>
<dbReference type="Gene3D" id="1.10.10.250">
    <property type="entry name" value="Ribosomal protein L11, C-terminal domain"/>
    <property type="match status" value="1"/>
</dbReference>
<dbReference type="Gene3D" id="3.30.1550.10">
    <property type="entry name" value="Ribosomal protein L11/L12, N-terminal domain"/>
    <property type="match status" value="1"/>
</dbReference>
<dbReference type="HAMAP" id="MF_00736">
    <property type="entry name" value="Ribosomal_uL11"/>
    <property type="match status" value="1"/>
</dbReference>
<dbReference type="InterPro" id="IPR000911">
    <property type="entry name" value="Ribosomal_uL11"/>
</dbReference>
<dbReference type="InterPro" id="IPR020783">
    <property type="entry name" value="Ribosomal_uL11_C"/>
</dbReference>
<dbReference type="InterPro" id="IPR036769">
    <property type="entry name" value="Ribosomal_uL11_C_sf"/>
</dbReference>
<dbReference type="InterPro" id="IPR020785">
    <property type="entry name" value="Ribosomal_uL11_CS"/>
</dbReference>
<dbReference type="InterPro" id="IPR020784">
    <property type="entry name" value="Ribosomal_uL11_N"/>
</dbReference>
<dbReference type="InterPro" id="IPR036796">
    <property type="entry name" value="Ribosomal_uL11_N_sf"/>
</dbReference>
<dbReference type="PANTHER" id="PTHR11661">
    <property type="entry name" value="60S RIBOSOMAL PROTEIN L12"/>
    <property type="match status" value="1"/>
</dbReference>
<dbReference type="PANTHER" id="PTHR11661:SF2">
    <property type="entry name" value="LARGE RIBOSOMAL SUBUNIT PROTEIN UL11"/>
    <property type="match status" value="1"/>
</dbReference>
<dbReference type="Pfam" id="PF00298">
    <property type="entry name" value="Ribosomal_L11"/>
    <property type="match status" value="1"/>
</dbReference>
<dbReference type="Pfam" id="PF03946">
    <property type="entry name" value="Ribosomal_L11_N"/>
    <property type="match status" value="1"/>
</dbReference>
<dbReference type="SMART" id="SM00649">
    <property type="entry name" value="RL11"/>
    <property type="match status" value="1"/>
</dbReference>
<dbReference type="SUPFAM" id="SSF54747">
    <property type="entry name" value="Ribosomal L11/L12e N-terminal domain"/>
    <property type="match status" value="1"/>
</dbReference>
<dbReference type="SUPFAM" id="SSF46906">
    <property type="entry name" value="Ribosomal protein L11, C-terminal domain"/>
    <property type="match status" value="1"/>
</dbReference>
<dbReference type="PROSITE" id="PS00359">
    <property type="entry name" value="RIBOSOMAL_L11"/>
    <property type="match status" value="1"/>
</dbReference>
<reference key="1">
    <citation type="journal article" date="2004" name="Proc. Natl. Acad. Sci. U.S.A.">
        <title>The diploid genome sequence of Candida albicans.</title>
        <authorList>
            <person name="Jones T."/>
            <person name="Federspiel N.A."/>
            <person name="Chibana H."/>
            <person name="Dungan J."/>
            <person name="Kalman S."/>
            <person name="Magee B.B."/>
            <person name="Newport G."/>
            <person name="Thorstenson Y.R."/>
            <person name="Agabian N."/>
            <person name="Magee P.T."/>
            <person name="Davis R.W."/>
            <person name="Scherer S."/>
        </authorList>
    </citation>
    <scope>NUCLEOTIDE SEQUENCE [LARGE SCALE GENOMIC DNA]</scope>
    <source>
        <strain>SC5314 / ATCC MYA-2876</strain>
    </source>
</reference>
<reference key="2">
    <citation type="journal article" date="2007" name="Genome Biol.">
        <title>Assembly of the Candida albicans genome into sixteen supercontigs aligned on the eight chromosomes.</title>
        <authorList>
            <person name="van het Hoog M."/>
            <person name="Rast T.J."/>
            <person name="Martchenko M."/>
            <person name="Grindle S."/>
            <person name="Dignard D."/>
            <person name="Hogues H."/>
            <person name="Cuomo C."/>
            <person name="Berriman M."/>
            <person name="Scherer S."/>
            <person name="Magee B.B."/>
            <person name="Whiteway M."/>
            <person name="Chibana H."/>
            <person name="Nantel A."/>
            <person name="Magee P.T."/>
        </authorList>
    </citation>
    <scope>GENOME REANNOTATION</scope>
    <source>
        <strain>SC5314 / ATCC MYA-2876</strain>
    </source>
</reference>
<reference key="3">
    <citation type="journal article" date="2013" name="Genome Biol.">
        <title>Assembly of a phased diploid Candida albicans genome facilitates allele-specific measurements and provides a simple model for repeat and indel structure.</title>
        <authorList>
            <person name="Muzzey D."/>
            <person name="Schwartz K."/>
            <person name="Weissman J.S."/>
            <person name="Sherlock G."/>
        </authorList>
    </citation>
    <scope>NUCLEOTIDE SEQUENCE [LARGE SCALE GENOMIC DNA]</scope>
    <scope>GENOME REANNOTATION</scope>
    <source>
        <strain>SC5314 / ATCC MYA-2876</strain>
    </source>
</reference>
<gene>
    <name type="primary">RPL12</name>
    <name type="ordered locus">orf19.1635</name>
    <name type="ORF">CAALFM_C302110WA</name>
</gene>
<proteinExistence type="evidence at protein level"/>
<comment type="function">
    <text evidence="1">Component of the ribosome, a large ribonucleoprotein complex responsible for the synthesis of proteins in the cell. The small ribosomal subunit (SSU) binds messenger RNAs (mRNAs) and translates the encoded message by selecting cognate aminoacyl-transfer RNA (tRNA) molecules. The large subunit (LSU) contains the ribosomal catalytic site termed the peptidyl transferase center (PTC), which catalyzes the formation of peptide bonds, thereby polymerizing the amino acids delivered by tRNAs into a polypeptide chain. The nascent polypeptides leave the ribosome through a tunnel in the LSU and interact with protein factors that function in enzymatic processing, targeting, and the membrane insertion of nascent chains at the exit of the ribosomal tunnel.</text>
</comment>
<comment type="subunit">
    <text evidence="1">Component of the large ribosomal subunit (By similarity). Mature ribosomes consist of a small (40S) and a large (60S) subunit (By similarity). The 40S subunit contains about 32 different proteins and 1 molecule of RNA (18S) (By similarity). The 60S subunit contains 45 different proteins and 3 molecules of RNA (25S, 5.8S and 5S) (By similarity).</text>
</comment>
<comment type="subcellular location">
    <subcellularLocation>
        <location evidence="1">Cytoplasm</location>
    </subcellularLocation>
</comment>
<comment type="similarity">
    <text evidence="2">Belongs to the universal ribosomal protein uL11 family.</text>
</comment>